<name>PRIO_AOTTR</name>
<sequence length="239" mass="26246">MLVLFVATWSDLGLCKKRPKPGGWNTGGSRYPGQSSPGGNRYPPQSGGWGQPHGGGWGQPHGGGWGQPHGGGWGQPHGGGWGQGGGTHNQWNKPSKPKTNMKHMAGAAAAGAVVGGLGGYMLGSAMSRPLIHFGNDYEDRYYRENMYRYPNQVYYRPVDQYSNQNNFVHDCVNITIKQHTVTTTTKGENFTETDVKIMERVVEQMCITQYEKESQAYYQRGSSMVLFSSPPVILLISFL</sequence>
<keyword id="KW-0034">Amyloid</keyword>
<keyword id="KW-1003">Cell membrane</keyword>
<keyword id="KW-0186">Copper</keyword>
<keyword id="KW-1015">Disulfide bond</keyword>
<keyword id="KW-0325">Glycoprotein</keyword>
<keyword id="KW-0333">Golgi apparatus</keyword>
<keyword id="KW-0336">GPI-anchor</keyword>
<keyword id="KW-0449">Lipoprotein</keyword>
<keyword id="KW-0472">Membrane</keyword>
<keyword id="KW-0479">Metal-binding</keyword>
<keyword id="KW-0640">Prion</keyword>
<keyword id="KW-0677">Repeat</keyword>
<keyword id="KW-0732">Signal</keyword>
<keyword id="KW-0862">Zinc</keyword>
<protein>
    <recommendedName>
        <fullName>Major prion protein</fullName>
        <shortName>PrP</shortName>
    </recommendedName>
    <alternativeName>
        <fullName>PrP27-30</fullName>
    </alternativeName>
    <alternativeName>
        <fullName>PrP33-35C</fullName>
    </alternativeName>
    <cdAntigenName>CD230</cdAntigenName>
</protein>
<comment type="function">
    <text evidence="2 4">Its primary physiological function is unclear. May play a role in neuronal development and synaptic plasticity. May be required for neuronal myelin sheath maintenance. May promote myelin homeostasis through acting as an agonist for ADGRG6 receptor. May play a role in iron uptake and iron homeostasis. Soluble oligomers are toxic to cultured neuroblastoma cells and induce apoptosis (in vitro) (By similarity). Association with GPC1 (via its heparan sulfate chains) targets PRNP to lipid rafts. Also provides Cu(2+) or Zn(2+) for the ascorbate-mediated GPC1 deaminase degradation of its heparan sulfate side chains (By similarity).</text>
</comment>
<comment type="subunit">
    <text evidence="2 4">Monomer and homodimer. Has a tendency to aggregate into amyloid fibrils containing a cross-beta spine, formed by a steric zipper of superposed beta-strands. Soluble oligomers may represent an intermediate stage on the path to fibril formation. Copper binding may promote oligomerization. Interacts with GRB2, APP, ERI3/PRNPIP and SYN1 (By similarity). Mislocalized cytosolically exposed PrP interacts with MGRN1; this interaction alters MGRN1 subcellular location and causes lysosomal enlargement (By similarity). Interacts with APP. Interacts with KIAA1191 (By similarity). Interacts with ADGRG6 (By similarity).</text>
</comment>
<comment type="subcellular location">
    <subcellularLocation>
        <location evidence="2">Cell membrane</location>
        <topology evidence="2">Lipid-anchor</topology>
        <topology evidence="2">GPI-anchor</topology>
    </subcellularLocation>
    <subcellularLocation>
        <location evidence="4">Golgi apparatus</location>
    </subcellularLocation>
    <text evidence="2">Targeted to lipid rafts via association with the heparan sulfate chains of GPC1. Colocates, in the presence of Cu(2+), to vesicles in para- and perinuclear regions, where both proteins undergo internalization. Heparin displaces PRNP from lipid rafts and promotes endocytosis.</text>
</comment>
<comment type="domain">
    <text evidence="2">The normal, monomeric form has a mainly alpha-helical structure. The disease-associated, protease-resistant form forms amyloid fibrils containing a cross-beta spine, formed by a steric zipper of superposed beta-strands. Disease mutations may favor intermolecular contacts via short beta strands, and may thereby trigger oligomerization.</text>
</comment>
<comment type="domain">
    <text evidence="2">Contains an N-terminal region composed of octamer repeats. At low copper concentrations, the sidechains of His residues from three or four repeats contribute to the binding of a single copper ion. Alternatively, a copper ion can be bound by interaction with the sidechain and backbone amide nitrogen of a single His residue. The observed copper binding stoichiometry suggests that two repeat regions cooperate to stabilize the binding of a single copper ion. At higher copper concentrations, each octamer can bind one copper ion by interactions with the His sidechain and Gly backbone atoms. A mixture of binding types may occur, especially in the case of octamer repeat expansion. Copper binding may stabilize the conformation of this region and may promote oligomerization.</text>
</comment>
<comment type="disease">
    <text evidence="7">PrP is found in high quantity in the brain of humans and animals infected with the degenerative neurological diseases kuru, Creutzfeldt-Jakob disease (CJD), Gerstmann-Straussler syndrome (GSS), scrapie, bovine spongiform encephalopathy (BSE), transmissible mink encephalopathy (TME), etc.</text>
</comment>
<comment type="similarity">
    <text evidence="7">Belongs to the prion family.</text>
</comment>
<evidence type="ECO:0000250" key="1"/>
<evidence type="ECO:0000250" key="2">
    <source>
        <dbReference type="UniProtKB" id="P04156"/>
    </source>
</evidence>
<evidence type="ECO:0000250" key="3">
    <source>
        <dbReference type="UniProtKB" id="P04273"/>
    </source>
</evidence>
<evidence type="ECO:0000250" key="4">
    <source>
        <dbReference type="UniProtKB" id="P04925"/>
    </source>
</evidence>
<evidence type="ECO:0000255" key="5"/>
<evidence type="ECO:0000256" key="6">
    <source>
        <dbReference type="SAM" id="MobiDB-lite"/>
    </source>
</evidence>
<evidence type="ECO:0000305" key="7"/>
<dbReference type="EMBL" id="U08293">
    <property type="protein sequence ID" value="AAC50082.1"/>
    <property type="molecule type" value="Genomic_DNA"/>
</dbReference>
<dbReference type="PIR" id="S53633">
    <property type="entry name" value="S53633"/>
</dbReference>
<dbReference type="BMRB" id="P40245"/>
<dbReference type="SMR" id="P40245"/>
<dbReference type="GlyCosmos" id="P40245">
    <property type="glycosylation" value="2 sites, No reported glycans"/>
</dbReference>
<dbReference type="GO" id="GO:0005794">
    <property type="term" value="C:Golgi apparatus"/>
    <property type="evidence" value="ECO:0007669"/>
    <property type="project" value="UniProtKB-SubCell"/>
</dbReference>
<dbReference type="GO" id="GO:0005886">
    <property type="term" value="C:plasma membrane"/>
    <property type="evidence" value="ECO:0007669"/>
    <property type="project" value="UniProtKB-SubCell"/>
</dbReference>
<dbReference type="GO" id="GO:0098552">
    <property type="term" value="C:side of membrane"/>
    <property type="evidence" value="ECO:0007669"/>
    <property type="project" value="UniProtKB-KW"/>
</dbReference>
<dbReference type="GO" id="GO:0005507">
    <property type="term" value="F:copper ion binding"/>
    <property type="evidence" value="ECO:0000250"/>
    <property type="project" value="UniProtKB"/>
</dbReference>
<dbReference type="GO" id="GO:0051260">
    <property type="term" value="P:protein homooligomerization"/>
    <property type="evidence" value="ECO:0007669"/>
    <property type="project" value="InterPro"/>
</dbReference>
<dbReference type="FunFam" id="1.10.790.10:FF:000001">
    <property type="entry name" value="Major prion protein"/>
    <property type="match status" value="1"/>
</dbReference>
<dbReference type="Gene3D" id="1.10.790.10">
    <property type="entry name" value="Prion/Doppel protein, beta-ribbon domain"/>
    <property type="match status" value="1"/>
</dbReference>
<dbReference type="InterPro" id="IPR000817">
    <property type="entry name" value="Prion"/>
</dbReference>
<dbReference type="InterPro" id="IPR036924">
    <property type="entry name" value="Prion/Doppel_b-ribbon_dom_sf"/>
</dbReference>
<dbReference type="InterPro" id="IPR022416">
    <property type="entry name" value="Prion/Doppel_prot_b-ribbon_dom"/>
</dbReference>
<dbReference type="InterPro" id="IPR020949">
    <property type="entry name" value="Prion_copper_b_octapeptide"/>
</dbReference>
<dbReference type="InterPro" id="IPR025860">
    <property type="entry name" value="Prion_N"/>
</dbReference>
<dbReference type="PANTHER" id="PTHR15506">
    <property type="entry name" value="DOPPEL PRION"/>
    <property type="match status" value="1"/>
</dbReference>
<dbReference type="PANTHER" id="PTHR15506:SF2">
    <property type="entry name" value="MAJOR PRION PROTEIN"/>
    <property type="match status" value="1"/>
</dbReference>
<dbReference type="Pfam" id="PF00377">
    <property type="entry name" value="Prion"/>
    <property type="match status" value="1"/>
</dbReference>
<dbReference type="Pfam" id="PF11587">
    <property type="entry name" value="Prion_bPrPp"/>
    <property type="match status" value="1"/>
</dbReference>
<dbReference type="Pfam" id="PF03991">
    <property type="entry name" value="Prion_octapep"/>
    <property type="match status" value="1"/>
</dbReference>
<dbReference type="PRINTS" id="PR00341">
    <property type="entry name" value="PRION"/>
</dbReference>
<dbReference type="SMART" id="SM00157">
    <property type="entry name" value="PRP"/>
    <property type="match status" value="1"/>
</dbReference>
<dbReference type="SUPFAM" id="SSF54098">
    <property type="entry name" value="Prion-like"/>
    <property type="match status" value="1"/>
</dbReference>
<dbReference type="PROSITE" id="PS00291">
    <property type="entry name" value="PRION_1"/>
    <property type="match status" value="1"/>
</dbReference>
<dbReference type="PROSITE" id="PS00706">
    <property type="entry name" value="PRION_2"/>
    <property type="match status" value="1"/>
</dbReference>
<gene>
    <name type="primary">PRNP</name>
    <name type="synonym">PRP</name>
</gene>
<organism>
    <name type="scientific">Aotus trivirgatus</name>
    <name type="common">Three-striped night monkey</name>
    <name type="synonym">Douroucouli</name>
    <dbReference type="NCBI Taxonomy" id="9505"/>
    <lineage>
        <taxon>Eukaryota</taxon>
        <taxon>Metazoa</taxon>
        <taxon>Chordata</taxon>
        <taxon>Craniata</taxon>
        <taxon>Vertebrata</taxon>
        <taxon>Euteleostomi</taxon>
        <taxon>Mammalia</taxon>
        <taxon>Eutheria</taxon>
        <taxon>Euarchontoglires</taxon>
        <taxon>Primates</taxon>
        <taxon>Haplorrhini</taxon>
        <taxon>Platyrrhini</taxon>
        <taxon>Aotidae</taxon>
        <taxon>Aotus</taxon>
    </lineage>
</organism>
<accession>P40245</accession>
<proteinExistence type="inferred from homology"/>
<feature type="signal peptide" evidence="1">
    <location>
        <begin position="1" status="less than"/>
        <end position="15"/>
    </location>
</feature>
<feature type="chain" id="PRO_0000025613" description="Major prion protein">
    <location>
        <begin position="16"/>
        <end position="222"/>
    </location>
</feature>
<feature type="propeptide" id="PRO_0000025614" description="Removed in mature form" evidence="1">
    <location>
        <begin position="223"/>
        <end position="239" status="greater than"/>
    </location>
</feature>
<feature type="repeat" description="1">
    <location>
        <begin position="44"/>
        <end position="51"/>
    </location>
</feature>
<feature type="repeat" description="2">
    <location>
        <begin position="52"/>
        <end position="59"/>
    </location>
</feature>
<feature type="repeat" description="3">
    <location>
        <begin position="60"/>
        <end position="67"/>
    </location>
</feature>
<feature type="repeat" description="4">
    <location>
        <begin position="68"/>
        <end position="75"/>
    </location>
</feature>
<feature type="repeat" description="5">
    <location>
        <begin position="76"/>
        <end position="83"/>
    </location>
</feature>
<feature type="region of interest" description="Disordered" evidence="6">
    <location>
        <begin position="15"/>
        <end position="98"/>
    </location>
</feature>
<feature type="region of interest" description="Interaction with GRB2, ERI3 and SYN1" evidence="4">
    <location>
        <begin position="16"/>
        <end position="222"/>
    </location>
</feature>
<feature type="region of interest" description="Interaction with ADGRG6" evidence="4">
    <location>
        <begin position="16"/>
        <end position="31"/>
    </location>
</feature>
<feature type="region of interest" description="5 X 8 AA tandem repeats of P-H-G-G-G-W-G-Q">
    <location>
        <begin position="44"/>
        <end position="83"/>
    </location>
</feature>
<feature type="compositionally biased region" description="Gly residues" evidence="6">
    <location>
        <begin position="47"/>
        <end position="87"/>
    </location>
</feature>
<feature type="binding site" evidence="2">
    <location>
        <position position="53"/>
    </location>
    <ligand>
        <name>Cu(2+)</name>
        <dbReference type="ChEBI" id="CHEBI:29036"/>
        <label>1</label>
    </ligand>
</feature>
<feature type="binding site" evidence="2">
    <location>
        <position position="54"/>
    </location>
    <ligand>
        <name>Cu(2+)</name>
        <dbReference type="ChEBI" id="CHEBI:29036"/>
        <label>1</label>
    </ligand>
</feature>
<feature type="binding site" evidence="2">
    <location>
        <position position="55"/>
    </location>
    <ligand>
        <name>Cu(2+)</name>
        <dbReference type="ChEBI" id="CHEBI:29036"/>
        <label>1</label>
    </ligand>
</feature>
<feature type="binding site" evidence="2">
    <location>
        <position position="61"/>
    </location>
    <ligand>
        <name>Cu(2+)</name>
        <dbReference type="ChEBI" id="CHEBI:29036"/>
        <label>2</label>
    </ligand>
</feature>
<feature type="binding site" evidence="2">
    <location>
        <position position="62"/>
    </location>
    <ligand>
        <name>Cu(2+)</name>
        <dbReference type="ChEBI" id="CHEBI:29036"/>
        <label>2</label>
    </ligand>
</feature>
<feature type="binding site" evidence="2">
    <location>
        <position position="63"/>
    </location>
    <ligand>
        <name>Cu(2+)</name>
        <dbReference type="ChEBI" id="CHEBI:29036"/>
        <label>2</label>
    </ligand>
</feature>
<feature type="binding site" evidence="2">
    <location>
        <position position="69"/>
    </location>
    <ligand>
        <name>Cu(2+)</name>
        <dbReference type="ChEBI" id="CHEBI:29036"/>
        <label>3</label>
    </ligand>
</feature>
<feature type="binding site" evidence="2">
    <location>
        <position position="70"/>
    </location>
    <ligand>
        <name>Cu(2+)</name>
        <dbReference type="ChEBI" id="CHEBI:29036"/>
        <label>3</label>
    </ligand>
</feature>
<feature type="binding site" evidence="2">
    <location>
        <position position="71"/>
    </location>
    <ligand>
        <name>Cu(2+)</name>
        <dbReference type="ChEBI" id="CHEBI:29036"/>
        <label>3</label>
    </ligand>
</feature>
<feature type="binding site" evidence="2">
    <location>
        <position position="77"/>
    </location>
    <ligand>
        <name>Cu(2+)</name>
        <dbReference type="ChEBI" id="CHEBI:29036"/>
        <label>4</label>
    </ligand>
</feature>
<feature type="binding site" evidence="2">
    <location>
        <position position="78"/>
    </location>
    <ligand>
        <name>Cu(2+)</name>
        <dbReference type="ChEBI" id="CHEBI:29036"/>
        <label>4</label>
    </ligand>
</feature>
<feature type="binding site" evidence="2">
    <location>
        <position position="79"/>
    </location>
    <ligand>
        <name>Cu(2+)</name>
        <dbReference type="ChEBI" id="CHEBI:29036"/>
        <label>4</label>
    </ligand>
</feature>
<feature type="lipid moiety-binding region" description="GPI-anchor amidated serine" evidence="3">
    <location>
        <position position="222"/>
    </location>
</feature>
<feature type="glycosylation site" description="N-linked (GlcNAc...) asparagine" evidence="5">
    <location>
        <position position="173"/>
    </location>
</feature>
<feature type="glycosylation site" description="N-linked (GlcNAc...) asparagine" evidence="5">
    <location>
        <position position="189"/>
    </location>
</feature>
<feature type="disulfide bond" evidence="3">
    <location>
        <begin position="171"/>
        <end position="206"/>
    </location>
</feature>
<feature type="non-terminal residue">
    <location>
        <position position="1"/>
    </location>
</feature>
<feature type="non-terminal residue">
    <location>
        <position position="239"/>
    </location>
</feature>
<reference key="1">
    <citation type="journal article" date="1995" name="J. Mol. Biol.">
        <title>Prion protein gene variation among primates.</title>
        <authorList>
            <person name="Schaetzl H.M."/>
            <person name="Da Costa M."/>
            <person name="Taylor L."/>
            <person name="Cohen F.E."/>
            <person name="Prusiner S.B."/>
        </authorList>
    </citation>
    <scope>NUCLEOTIDE SEQUENCE [GENOMIC DNA]</scope>
</reference>